<reference key="1">
    <citation type="journal article" date="2007" name="BMC Microbiol.">
        <title>Subtle genetic changes enhance virulence of methicillin resistant and sensitive Staphylococcus aureus.</title>
        <authorList>
            <person name="Highlander S.K."/>
            <person name="Hulten K.G."/>
            <person name="Qin X."/>
            <person name="Jiang H."/>
            <person name="Yerrapragada S."/>
            <person name="Mason E.O. Jr."/>
            <person name="Shang Y."/>
            <person name="Williams T.M."/>
            <person name="Fortunov R.M."/>
            <person name="Liu Y."/>
            <person name="Igboeli O."/>
            <person name="Petrosino J."/>
            <person name="Tirumalai M."/>
            <person name="Uzman A."/>
            <person name="Fox G.E."/>
            <person name="Cardenas A.M."/>
            <person name="Muzny D.M."/>
            <person name="Hemphill L."/>
            <person name="Ding Y."/>
            <person name="Dugan S."/>
            <person name="Blyth P.R."/>
            <person name="Buhay C.J."/>
            <person name="Dinh H.H."/>
            <person name="Hawes A.C."/>
            <person name="Holder M."/>
            <person name="Kovar C.L."/>
            <person name="Lee S.L."/>
            <person name="Liu W."/>
            <person name="Nazareth L.V."/>
            <person name="Wang Q."/>
            <person name="Zhou J."/>
            <person name="Kaplan S.L."/>
            <person name="Weinstock G.M."/>
        </authorList>
    </citation>
    <scope>NUCLEOTIDE SEQUENCE [LARGE SCALE GENOMIC DNA]</scope>
    <source>
        <strain>USA300 / TCH1516</strain>
    </source>
</reference>
<proteinExistence type="inferred from homology"/>
<sequence length="94" mass="10416">MLKPIGNRVIIEKKEQEQTTKSGIVLTDSAKEKSNEGVIVAVGTGRLLNDGTRVTPEVKEGDRVVFQQYAGTEVKRDNETYLVLNEEDILAVIE</sequence>
<protein>
    <recommendedName>
        <fullName evidence="1">Co-chaperonin GroES</fullName>
    </recommendedName>
    <alternativeName>
        <fullName evidence="1">10 kDa chaperonin</fullName>
    </alternativeName>
    <alternativeName>
        <fullName evidence="1">Chaperonin-10</fullName>
        <shortName evidence="1">Cpn10</shortName>
    </alternativeName>
</protein>
<comment type="function">
    <text evidence="1">Together with the chaperonin GroEL, plays an essential role in assisting protein folding. The GroEL-GroES system forms a nano-cage that allows encapsulation of the non-native substrate proteins and provides a physical environment optimized to promote and accelerate protein folding. GroES binds to the apical surface of the GroEL ring, thereby capping the opening of the GroEL channel.</text>
</comment>
<comment type="subunit">
    <text evidence="1">Heptamer of 7 subunits arranged in a ring. Interacts with the chaperonin GroEL.</text>
</comment>
<comment type="subcellular location">
    <subcellularLocation>
        <location evidence="1">Cytoplasm</location>
    </subcellularLocation>
</comment>
<comment type="similarity">
    <text evidence="1">Belongs to the GroES chaperonin family.</text>
</comment>
<keyword id="KW-0143">Chaperone</keyword>
<keyword id="KW-0963">Cytoplasm</keyword>
<name>CH10_STAAT</name>
<organism>
    <name type="scientific">Staphylococcus aureus (strain USA300 / TCH1516)</name>
    <dbReference type="NCBI Taxonomy" id="451516"/>
    <lineage>
        <taxon>Bacteria</taxon>
        <taxon>Bacillati</taxon>
        <taxon>Bacillota</taxon>
        <taxon>Bacilli</taxon>
        <taxon>Bacillales</taxon>
        <taxon>Staphylococcaceae</taxon>
        <taxon>Staphylococcus</taxon>
    </lineage>
</organism>
<gene>
    <name evidence="1" type="primary">groES</name>
    <name evidence="1" type="synonym">groS</name>
    <name type="ordered locus">USA300HOU_2025</name>
</gene>
<dbReference type="EMBL" id="CP000730">
    <property type="protein sequence ID" value="ABX30022.1"/>
    <property type="molecule type" value="Genomic_DNA"/>
</dbReference>
<dbReference type="RefSeq" id="WP_000917289.1">
    <property type="nucleotide sequence ID" value="NC_010079.1"/>
</dbReference>
<dbReference type="SMR" id="A8Z4T3"/>
<dbReference type="GeneID" id="98346332"/>
<dbReference type="KEGG" id="sax:USA300HOU_2025"/>
<dbReference type="HOGENOM" id="CLU_132825_2_1_9"/>
<dbReference type="GO" id="GO:0005737">
    <property type="term" value="C:cytoplasm"/>
    <property type="evidence" value="ECO:0007669"/>
    <property type="project" value="UniProtKB-SubCell"/>
</dbReference>
<dbReference type="GO" id="GO:0005524">
    <property type="term" value="F:ATP binding"/>
    <property type="evidence" value="ECO:0007669"/>
    <property type="project" value="InterPro"/>
</dbReference>
<dbReference type="GO" id="GO:0046872">
    <property type="term" value="F:metal ion binding"/>
    <property type="evidence" value="ECO:0007669"/>
    <property type="project" value="TreeGrafter"/>
</dbReference>
<dbReference type="GO" id="GO:0044183">
    <property type="term" value="F:protein folding chaperone"/>
    <property type="evidence" value="ECO:0007669"/>
    <property type="project" value="InterPro"/>
</dbReference>
<dbReference type="GO" id="GO:0051087">
    <property type="term" value="F:protein-folding chaperone binding"/>
    <property type="evidence" value="ECO:0007669"/>
    <property type="project" value="TreeGrafter"/>
</dbReference>
<dbReference type="GO" id="GO:0051082">
    <property type="term" value="F:unfolded protein binding"/>
    <property type="evidence" value="ECO:0007669"/>
    <property type="project" value="TreeGrafter"/>
</dbReference>
<dbReference type="GO" id="GO:0051085">
    <property type="term" value="P:chaperone cofactor-dependent protein refolding"/>
    <property type="evidence" value="ECO:0007669"/>
    <property type="project" value="TreeGrafter"/>
</dbReference>
<dbReference type="CDD" id="cd00320">
    <property type="entry name" value="cpn10"/>
    <property type="match status" value="1"/>
</dbReference>
<dbReference type="FunFam" id="2.30.33.40:FF:000001">
    <property type="entry name" value="10 kDa chaperonin"/>
    <property type="match status" value="1"/>
</dbReference>
<dbReference type="Gene3D" id="2.30.33.40">
    <property type="entry name" value="GroES chaperonin"/>
    <property type="match status" value="1"/>
</dbReference>
<dbReference type="HAMAP" id="MF_00580">
    <property type="entry name" value="CH10"/>
    <property type="match status" value="1"/>
</dbReference>
<dbReference type="InterPro" id="IPR020818">
    <property type="entry name" value="Chaperonin_GroES"/>
</dbReference>
<dbReference type="InterPro" id="IPR037124">
    <property type="entry name" value="Chaperonin_GroES_sf"/>
</dbReference>
<dbReference type="InterPro" id="IPR018369">
    <property type="entry name" value="Chaprnonin_Cpn10_CS"/>
</dbReference>
<dbReference type="InterPro" id="IPR011032">
    <property type="entry name" value="GroES-like_sf"/>
</dbReference>
<dbReference type="NCBIfam" id="NF001531">
    <property type="entry name" value="PRK00364.2-2"/>
    <property type="match status" value="1"/>
</dbReference>
<dbReference type="NCBIfam" id="NF001532">
    <property type="entry name" value="PRK00364.2-3"/>
    <property type="match status" value="1"/>
</dbReference>
<dbReference type="NCBIfam" id="NF001533">
    <property type="entry name" value="PRK00364.2-4"/>
    <property type="match status" value="1"/>
</dbReference>
<dbReference type="NCBIfam" id="NF001534">
    <property type="entry name" value="PRK00364.2-5"/>
    <property type="match status" value="1"/>
</dbReference>
<dbReference type="PANTHER" id="PTHR10772">
    <property type="entry name" value="10 KDA HEAT SHOCK PROTEIN"/>
    <property type="match status" value="1"/>
</dbReference>
<dbReference type="PANTHER" id="PTHR10772:SF58">
    <property type="entry name" value="CO-CHAPERONIN GROES"/>
    <property type="match status" value="1"/>
</dbReference>
<dbReference type="Pfam" id="PF00166">
    <property type="entry name" value="Cpn10"/>
    <property type="match status" value="1"/>
</dbReference>
<dbReference type="PRINTS" id="PR00297">
    <property type="entry name" value="CHAPERONIN10"/>
</dbReference>
<dbReference type="SMART" id="SM00883">
    <property type="entry name" value="Cpn10"/>
    <property type="match status" value="1"/>
</dbReference>
<dbReference type="SUPFAM" id="SSF50129">
    <property type="entry name" value="GroES-like"/>
    <property type="match status" value="1"/>
</dbReference>
<dbReference type="PROSITE" id="PS00681">
    <property type="entry name" value="CHAPERONINS_CPN10"/>
    <property type="match status" value="1"/>
</dbReference>
<accession>A8Z4T3</accession>
<feature type="chain" id="PRO_1000082398" description="Co-chaperonin GroES">
    <location>
        <begin position="1"/>
        <end position="94"/>
    </location>
</feature>
<evidence type="ECO:0000255" key="1">
    <source>
        <dbReference type="HAMAP-Rule" id="MF_00580"/>
    </source>
</evidence>